<comment type="function">
    <text evidence="1">Might take part in the signal recognition particle (SRP) pathway. This is inferred from the conservation of its genetic proximity to ftsY/ffh. May be a regulatory protein.</text>
</comment>
<comment type="similarity">
    <text evidence="1">Belongs to the UPF0122 family.</text>
</comment>
<gene>
    <name type="ordered locus">CLB_2314</name>
</gene>
<evidence type="ECO:0000255" key="1">
    <source>
        <dbReference type="HAMAP-Rule" id="MF_00245"/>
    </source>
</evidence>
<protein>
    <recommendedName>
        <fullName evidence="1">UPF0122 protein CLB_2314</fullName>
    </recommendedName>
</protein>
<reference key="1">
    <citation type="journal article" date="2007" name="PLoS ONE">
        <title>Analysis of the neurotoxin complex genes in Clostridium botulinum A1-A4 and B1 strains: BoNT/A3, /Ba4 and /B1 clusters are located within plasmids.</title>
        <authorList>
            <person name="Smith T.J."/>
            <person name="Hill K.K."/>
            <person name="Foley B.T."/>
            <person name="Detter J.C."/>
            <person name="Munk A.C."/>
            <person name="Bruce D.C."/>
            <person name="Doggett N.A."/>
            <person name="Smith L.A."/>
            <person name="Marks J.D."/>
            <person name="Xie G."/>
            <person name="Brettin T.S."/>
        </authorList>
    </citation>
    <scope>NUCLEOTIDE SEQUENCE [LARGE SCALE GENOMIC DNA]</scope>
    <source>
        <strain>ATCC 19397 / Type A</strain>
    </source>
</reference>
<accession>A7FW14</accession>
<dbReference type="EMBL" id="CP000726">
    <property type="protein sequence ID" value="ABS35814.1"/>
    <property type="molecule type" value="Genomic_DNA"/>
</dbReference>
<dbReference type="RefSeq" id="WP_003393779.1">
    <property type="nucleotide sequence ID" value="NC_009697.1"/>
</dbReference>
<dbReference type="SMR" id="A7FW14"/>
<dbReference type="KEGG" id="cba:CLB_2314"/>
<dbReference type="HOGENOM" id="CLU_129218_0_1_9"/>
<dbReference type="Gene3D" id="1.10.10.10">
    <property type="entry name" value="Winged helix-like DNA-binding domain superfamily/Winged helix DNA-binding domain"/>
    <property type="match status" value="1"/>
</dbReference>
<dbReference type="HAMAP" id="MF_00245">
    <property type="entry name" value="UPF0122"/>
    <property type="match status" value="1"/>
</dbReference>
<dbReference type="InterPro" id="IPR013324">
    <property type="entry name" value="RNA_pol_sigma_r3/r4-like"/>
</dbReference>
<dbReference type="InterPro" id="IPR007394">
    <property type="entry name" value="UPF0122"/>
</dbReference>
<dbReference type="InterPro" id="IPR054831">
    <property type="entry name" value="UPF0122_fam_protein"/>
</dbReference>
<dbReference type="InterPro" id="IPR036388">
    <property type="entry name" value="WH-like_DNA-bd_sf"/>
</dbReference>
<dbReference type="NCBIfam" id="NF001072">
    <property type="entry name" value="PRK00118.2-2"/>
    <property type="match status" value="1"/>
</dbReference>
<dbReference type="NCBIfam" id="NF001074">
    <property type="entry name" value="PRK00118.2-4"/>
    <property type="match status" value="1"/>
</dbReference>
<dbReference type="NCBIfam" id="NF045758">
    <property type="entry name" value="YlxM"/>
    <property type="match status" value="1"/>
</dbReference>
<dbReference type="PANTHER" id="PTHR40083">
    <property type="entry name" value="UPF0122 PROTEIN CBO2450/CLC_2298"/>
    <property type="match status" value="1"/>
</dbReference>
<dbReference type="PANTHER" id="PTHR40083:SF1">
    <property type="entry name" value="UPF0122 PROTEIN YLXM"/>
    <property type="match status" value="1"/>
</dbReference>
<dbReference type="Pfam" id="PF04297">
    <property type="entry name" value="UPF0122"/>
    <property type="match status" value="1"/>
</dbReference>
<dbReference type="SUPFAM" id="SSF88659">
    <property type="entry name" value="Sigma3 and sigma4 domains of RNA polymerase sigma factors"/>
    <property type="match status" value="1"/>
</dbReference>
<feature type="chain" id="PRO_1000012521" description="UPF0122 protein CLB_2314">
    <location>
        <begin position="1"/>
        <end position="110"/>
    </location>
</feature>
<proteinExistence type="inferred from homology"/>
<name>Y2314_CLOB1</name>
<organism>
    <name type="scientific">Clostridium botulinum (strain ATCC 19397 / Type A)</name>
    <dbReference type="NCBI Taxonomy" id="441770"/>
    <lineage>
        <taxon>Bacteria</taxon>
        <taxon>Bacillati</taxon>
        <taxon>Bacillota</taxon>
        <taxon>Clostridia</taxon>
        <taxon>Eubacteriales</taxon>
        <taxon>Clostridiaceae</taxon>
        <taxon>Clostridium</taxon>
    </lineage>
</organism>
<sequence length="110" mass="13224">MEEIVEMSLLLDFYGSLLTEKQNKIMDLYYNNDYSLKEISELTNTSRQAVHDIVKRCHKALLQYEEKLHMMERFINLENSKEKLLNMLNKVTKENIKEIDHIKKYIIDNI</sequence>